<organism>
    <name type="scientific">Staphylococcus saprophyticus subsp. saprophyticus (strain ATCC 15305 / DSM 20229 / NCIMB 8711 / NCTC 7292 / S-41)</name>
    <dbReference type="NCBI Taxonomy" id="342451"/>
    <lineage>
        <taxon>Bacteria</taxon>
        <taxon>Bacillati</taxon>
        <taxon>Bacillota</taxon>
        <taxon>Bacilli</taxon>
        <taxon>Bacillales</taxon>
        <taxon>Staphylococcaceae</taxon>
        <taxon>Staphylococcus</taxon>
    </lineage>
</organism>
<proteinExistence type="inferred from homology"/>
<name>TCAA_STAS1</name>
<protein>
    <recommendedName>
        <fullName>Membrane-associated protein TcaA</fullName>
    </recommendedName>
</protein>
<comment type="function">
    <text evidence="1">Plays a major role in decreasing resistance to glycopeptide antibiotics.</text>
</comment>
<comment type="subcellular location">
    <subcellularLocation>
        <location evidence="1">Cell membrane</location>
        <topology evidence="1">Single-pass membrane protein</topology>
    </subcellularLocation>
</comment>
<comment type="similarity">
    <text evidence="3">Belongs to the TcaA family.</text>
</comment>
<keyword id="KW-0046">Antibiotic resistance</keyword>
<keyword id="KW-1003">Cell membrane</keyword>
<keyword id="KW-0472">Membrane</keyword>
<keyword id="KW-0479">Metal-binding</keyword>
<keyword id="KW-1185">Reference proteome</keyword>
<keyword id="KW-0812">Transmembrane</keyword>
<keyword id="KW-1133">Transmembrane helix</keyword>
<keyword id="KW-0862">Zinc</keyword>
<keyword id="KW-0863">Zinc-finger</keyword>
<gene>
    <name type="primary">tcaA</name>
    <name type="ordered locus">SSP0546</name>
</gene>
<dbReference type="EMBL" id="AP008934">
    <property type="protein sequence ID" value="BAE17691.1"/>
    <property type="molecule type" value="Genomic_DNA"/>
</dbReference>
<dbReference type="RefSeq" id="WP_011302497.1">
    <property type="nucleotide sequence ID" value="NZ_MTGA01000036.1"/>
</dbReference>
<dbReference type="SMR" id="Q49ZT3"/>
<dbReference type="KEGG" id="ssp:SSP0546"/>
<dbReference type="eggNOG" id="COG4640">
    <property type="taxonomic scope" value="Bacteria"/>
</dbReference>
<dbReference type="HOGENOM" id="CLU_047245_0_0_9"/>
<dbReference type="OrthoDB" id="2416352at2"/>
<dbReference type="Proteomes" id="UP000006371">
    <property type="component" value="Chromosome"/>
</dbReference>
<dbReference type="GO" id="GO:0005886">
    <property type="term" value="C:plasma membrane"/>
    <property type="evidence" value="ECO:0007669"/>
    <property type="project" value="UniProtKB-SubCell"/>
</dbReference>
<dbReference type="GO" id="GO:0008270">
    <property type="term" value="F:zinc ion binding"/>
    <property type="evidence" value="ECO:0007669"/>
    <property type="project" value="UniProtKB-KW"/>
</dbReference>
<dbReference type="GO" id="GO:0046677">
    <property type="term" value="P:response to antibiotic"/>
    <property type="evidence" value="ECO:0007669"/>
    <property type="project" value="UniProtKB-KW"/>
</dbReference>
<dbReference type="InterPro" id="IPR023599">
    <property type="entry name" value="Mem_prot_TcaA"/>
</dbReference>
<dbReference type="InterPro" id="IPR054529">
    <property type="entry name" value="TcaA_2nd"/>
</dbReference>
<dbReference type="InterPro" id="IPR054530">
    <property type="entry name" value="TcaA_4th"/>
</dbReference>
<dbReference type="PANTHER" id="PTHR40038">
    <property type="entry name" value="MEMBRANE-ASSOCIATED PROTEIN TCAA"/>
    <property type="match status" value="1"/>
</dbReference>
<dbReference type="PANTHER" id="PTHR40038:SF1">
    <property type="entry name" value="MEMBRANE-ASSOCIATED PROTEIN TCAA"/>
    <property type="match status" value="1"/>
</dbReference>
<dbReference type="Pfam" id="PF22813">
    <property type="entry name" value="TcaA_2nd"/>
    <property type="match status" value="1"/>
</dbReference>
<dbReference type="Pfam" id="PF22820">
    <property type="entry name" value="TcaA_3rd_4th"/>
    <property type="match status" value="1"/>
</dbReference>
<dbReference type="Pfam" id="PF22819">
    <property type="entry name" value="TcaA_5th"/>
    <property type="match status" value="1"/>
</dbReference>
<dbReference type="PIRSF" id="PIRSF032522">
    <property type="entry name" value="TcaA"/>
    <property type="match status" value="1"/>
</dbReference>
<evidence type="ECO:0000250" key="1"/>
<evidence type="ECO:0000255" key="2"/>
<evidence type="ECO:0000305" key="3"/>
<reference key="1">
    <citation type="journal article" date="2005" name="Proc. Natl. Acad. Sci. U.S.A.">
        <title>Whole genome sequence of Staphylococcus saprophyticus reveals the pathogenesis of uncomplicated urinary tract infection.</title>
        <authorList>
            <person name="Kuroda M."/>
            <person name="Yamashita A."/>
            <person name="Hirakawa H."/>
            <person name="Kumano M."/>
            <person name="Morikawa K."/>
            <person name="Higashide M."/>
            <person name="Maruyama A."/>
            <person name="Inose Y."/>
            <person name="Matoba K."/>
            <person name="Toh H."/>
            <person name="Kuhara S."/>
            <person name="Hattori M."/>
            <person name="Ohta T."/>
        </authorList>
    </citation>
    <scope>NUCLEOTIDE SEQUENCE [LARGE SCALE GENOMIC DNA]</scope>
    <source>
        <strain>ATCC 15305 / DSM 20229 / NCIMB 8711 / NCTC 7292 / S-41</strain>
    </source>
</reference>
<sequence length="461" mass="52245">MRKCPKCGGNMRDKQSKCGHCGYEVTDNHSEQLTRSLKDNKKSANIKARKIIPWGIAFFIIILLIIIFFLLKNFNSPEAQSELLINAVDNNDTQKLSTILSTQNNSVDETEATAYIKYIKNEVGMDNFVKDVNQKIKKLNESETKEADFVTAKNGENVLRVSKNGRRYLIFDNMSFTAPTKEAIVKPKYDATYKFKSDDKQKTVTAEKNKTTAIGKFIPGDYLLETKKETANGQFDGQLKFNFNNSNNETIDVSEDFNEAYIQVELSGASEIDKDTVKVKINDKTYDYAKAKEIGPYPKTNDITVSAEGEAKKKTFKSAETTVKTDNLKDKTKVTLNFDDDEIQSYVDKKEKEENSFRNKVTNFFGNFTTAMNSAHSQSDFSLVSSYLKKNTDNYKSTKSDVNSNRLFFIQQPQITEIIKQGNTFYVTGQALKENGQYGEVDYQLQGDGDADNLKVVKYSE</sequence>
<accession>Q49ZT3</accession>
<feature type="chain" id="PRO_0000333176" description="Membrane-associated protein TcaA">
    <location>
        <begin position="1"/>
        <end position="461"/>
    </location>
</feature>
<feature type="topological domain" description="Cytoplasmic" evidence="2">
    <location>
        <begin position="1"/>
        <end position="50"/>
    </location>
</feature>
<feature type="transmembrane region" description="Helical" evidence="2">
    <location>
        <begin position="51"/>
        <end position="71"/>
    </location>
</feature>
<feature type="topological domain" description="Extracellular" evidence="2">
    <location>
        <begin position="72"/>
        <end position="461"/>
    </location>
</feature>
<feature type="zinc finger region" description="C4-type" evidence="2">
    <location>
        <begin position="4"/>
        <end position="21"/>
    </location>
</feature>